<dbReference type="EMBL" id="CM003150">
    <property type="protein sequence ID" value="KIS67962.1"/>
    <property type="molecule type" value="Genomic_DNA"/>
</dbReference>
<dbReference type="RefSeq" id="XP_011390461.1">
    <property type="nucleotide sequence ID" value="XM_011392159.1"/>
</dbReference>
<dbReference type="SMR" id="Q4P7A4"/>
<dbReference type="FunCoup" id="Q4P7A4">
    <property type="interactions" value="120"/>
</dbReference>
<dbReference type="STRING" id="237631.Q4P7A4"/>
<dbReference type="EnsemblFungi" id="KIS67962">
    <property type="protein sequence ID" value="KIS67962"/>
    <property type="gene ID" value="UMAG_04009"/>
</dbReference>
<dbReference type="GeneID" id="23564309"/>
<dbReference type="KEGG" id="uma:UMAG_04009"/>
<dbReference type="VEuPathDB" id="FungiDB:UMAG_04009"/>
<dbReference type="eggNOG" id="KOG2929">
    <property type="taxonomic scope" value="Eukaryota"/>
</dbReference>
<dbReference type="HOGENOM" id="CLU_007884_7_0_1"/>
<dbReference type="InParanoid" id="Q4P7A4"/>
<dbReference type="OMA" id="NMLVAND"/>
<dbReference type="OrthoDB" id="191995at2759"/>
<dbReference type="Proteomes" id="UP000000561">
    <property type="component" value="Chromosome 11"/>
</dbReference>
<dbReference type="GO" id="GO:0005759">
    <property type="term" value="C:mitochondrial matrix"/>
    <property type="evidence" value="ECO:0000318"/>
    <property type="project" value="GO_Central"/>
</dbReference>
<dbReference type="GO" id="GO:0016740">
    <property type="term" value="F:transferase activity"/>
    <property type="evidence" value="ECO:0007669"/>
    <property type="project" value="UniProtKB-KW"/>
</dbReference>
<dbReference type="GO" id="GO:0016226">
    <property type="term" value="P:iron-sulfur cluster assembly"/>
    <property type="evidence" value="ECO:0000318"/>
    <property type="project" value="GO_Central"/>
</dbReference>
<dbReference type="FunFam" id="3.30.1360.120:FF:000071">
    <property type="entry name" value="Putative transferase CAF17, mitochondrial"/>
    <property type="match status" value="1"/>
</dbReference>
<dbReference type="Gene3D" id="2.40.30.160">
    <property type="match status" value="1"/>
</dbReference>
<dbReference type="Gene3D" id="3.30.1360.120">
    <property type="entry name" value="Probable tRNA modification gtpase trme, domain 1"/>
    <property type="match status" value="1"/>
</dbReference>
<dbReference type="InterPro" id="IPR027266">
    <property type="entry name" value="TrmE/GcvT_dom1"/>
</dbReference>
<dbReference type="InterPro" id="IPR045179">
    <property type="entry name" value="YgfZ/GcvT"/>
</dbReference>
<dbReference type="InterPro" id="IPR017703">
    <property type="entry name" value="YgfZ/GcvT_CS"/>
</dbReference>
<dbReference type="NCBIfam" id="TIGR03317">
    <property type="entry name" value="ygfZ_signature"/>
    <property type="match status" value="1"/>
</dbReference>
<dbReference type="PANTHER" id="PTHR22602">
    <property type="entry name" value="TRANSFERASE CAF17, MITOCHONDRIAL-RELATED"/>
    <property type="match status" value="1"/>
</dbReference>
<dbReference type="PANTHER" id="PTHR22602:SF0">
    <property type="entry name" value="TRANSFERASE CAF17, MITOCHONDRIAL-RELATED"/>
    <property type="match status" value="1"/>
</dbReference>
<dbReference type="Pfam" id="PF25455">
    <property type="entry name" value="Beta-barrel_CAF17_C"/>
    <property type="match status" value="1"/>
</dbReference>
<dbReference type="SUPFAM" id="SSF103025">
    <property type="entry name" value="Folate-binding domain"/>
    <property type="match status" value="1"/>
</dbReference>
<organism>
    <name type="scientific">Mycosarcoma maydis</name>
    <name type="common">Corn smut fungus</name>
    <name type="synonym">Ustilago maydis</name>
    <dbReference type="NCBI Taxonomy" id="5270"/>
    <lineage>
        <taxon>Eukaryota</taxon>
        <taxon>Fungi</taxon>
        <taxon>Dikarya</taxon>
        <taxon>Basidiomycota</taxon>
        <taxon>Ustilaginomycotina</taxon>
        <taxon>Ustilaginomycetes</taxon>
        <taxon>Ustilaginales</taxon>
        <taxon>Ustilaginaceae</taxon>
        <taxon>Mycosarcoma</taxon>
    </lineage>
</organism>
<gene>
    <name type="primary">CAF17</name>
    <name type="ORF">UMAG_04009</name>
</gene>
<comment type="subcellular location">
    <subcellularLocation>
        <location evidence="1">Mitochondrion matrix</location>
    </subcellularLocation>
</comment>
<comment type="similarity">
    <text evidence="3">Belongs to the GcvT family. CAF17/IBA57 subfamily.</text>
</comment>
<protein>
    <recommendedName>
        <fullName>Iron-sulfur cluster assembly factor IBA57 homolog, mitochondrial</fullName>
    </recommendedName>
</protein>
<feature type="transit peptide" description="Mitochondrion" evidence="2">
    <location>
        <begin position="1"/>
        <end position="108"/>
    </location>
</feature>
<feature type="chain" id="PRO_0000301708" description="Iron-sulfur cluster assembly factor IBA57 homolog, mitochondrial">
    <location>
        <begin position="109"/>
        <end position="403"/>
    </location>
</feature>
<name>CAF17_MYCMD</name>
<proteinExistence type="inferred from homology"/>
<reference key="1">
    <citation type="journal article" date="2006" name="Nature">
        <title>Insights from the genome of the biotrophic fungal plant pathogen Ustilago maydis.</title>
        <authorList>
            <person name="Kaemper J."/>
            <person name="Kahmann R."/>
            <person name="Boelker M."/>
            <person name="Ma L.-J."/>
            <person name="Brefort T."/>
            <person name="Saville B.J."/>
            <person name="Banuett F."/>
            <person name="Kronstad J.W."/>
            <person name="Gold S.E."/>
            <person name="Mueller O."/>
            <person name="Perlin M.H."/>
            <person name="Woesten H.A.B."/>
            <person name="de Vries R."/>
            <person name="Ruiz-Herrera J."/>
            <person name="Reynaga-Pena C.G."/>
            <person name="Snetselaar K."/>
            <person name="McCann M."/>
            <person name="Perez-Martin J."/>
            <person name="Feldbruegge M."/>
            <person name="Basse C.W."/>
            <person name="Steinberg G."/>
            <person name="Ibeas J.I."/>
            <person name="Holloman W."/>
            <person name="Guzman P."/>
            <person name="Farman M.L."/>
            <person name="Stajich J.E."/>
            <person name="Sentandreu R."/>
            <person name="Gonzalez-Prieto J.M."/>
            <person name="Kennell J.C."/>
            <person name="Molina L."/>
            <person name="Schirawski J."/>
            <person name="Mendoza-Mendoza A."/>
            <person name="Greilinger D."/>
            <person name="Muench K."/>
            <person name="Roessel N."/>
            <person name="Scherer M."/>
            <person name="Vranes M."/>
            <person name="Ladendorf O."/>
            <person name="Vincon V."/>
            <person name="Fuchs U."/>
            <person name="Sandrock B."/>
            <person name="Meng S."/>
            <person name="Ho E.C.H."/>
            <person name="Cahill M.J."/>
            <person name="Boyce K.J."/>
            <person name="Klose J."/>
            <person name="Klosterman S.J."/>
            <person name="Deelstra H.J."/>
            <person name="Ortiz-Castellanos L."/>
            <person name="Li W."/>
            <person name="Sanchez-Alonso P."/>
            <person name="Schreier P.H."/>
            <person name="Haeuser-Hahn I."/>
            <person name="Vaupel M."/>
            <person name="Koopmann E."/>
            <person name="Friedrich G."/>
            <person name="Voss H."/>
            <person name="Schlueter T."/>
            <person name="Margolis J."/>
            <person name="Platt D."/>
            <person name="Swimmer C."/>
            <person name="Gnirke A."/>
            <person name="Chen F."/>
            <person name="Vysotskaia V."/>
            <person name="Mannhaupt G."/>
            <person name="Gueldener U."/>
            <person name="Muensterkoetter M."/>
            <person name="Haase D."/>
            <person name="Oesterheld M."/>
            <person name="Mewes H.-W."/>
            <person name="Mauceli E.W."/>
            <person name="DeCaprio D."/>
            <person name="Wade C.M."/>
            <person name="Butler J."/>
            <person name="Young S.K."/>
            <person name="Jaffe D.B."/>
            <person name="Calvo S.E."/>
            <person name="Nusbaum C."/>
            <person name="Galagan J.E."/>
            <person name="Birren B.W."/>
        </authorList>
    </citation>
    <scope>NUCLEOTIDE SEQUENCE [LARGE SCALE GENOMIC DNA]</scope>
    <source>
        <strain>DSM 14603 / FGSC 9021 / UM521</strain>
    </source>
</reference>
<reference key="2">
    <citation type="submission" date="2014-09" db="EMBL/GenBank/DDBJ databases">
        <authorList>
            <person name="Gueldener U."/>
            <person name="Muensterkoetter M."/>
            <person name="Walter M.C."/>
            <person name="Mannhaupt G."/>
            <person name="Kahmann R."/>
        </authorList>
    </citation>
    <scope>GENOME REANNOTATION</scope>
    <source>
        <strain>DSM 14603 / FGSC 9021 / UM521</strain>
    </source>
</reference>
<keyword id="KW-0496">Mitochondrion</keyword>
<keyword id="KW-1185">Reference proteome</keyword>
<keyword id="KW-0809">Transit peptide</keyword>
<evidence type="ECO:0000250" key="1">
    <source>
        <dbReference type="UniProtKB" id="P47158"/>
    </source>
</evidence>
<evidence type="ECO:0000255" key="2"/>
<evidence type="ECO:0000305" key="3"/>
<accession>Q4P7A4</accession>
<accession>A0A0D1C2E1</accession>
<sequence length="403" mass="43814">MITRRALVDPLARQPLKTSTNILRAASIIPRCTFGSTASSAAADKTSSTWKLAKVPHRGVVQVSGRDTVKLLQGLVSNDVKALDSTTLTHQPPNMVYAGFMNPQGRMLADVFIHRQPANQDGSPRWLLDIDSRTLPSLVAFIKKFKLRSKVKLTDLSTDYHVVQAWDSNSQAPPTIAEKLSIDPRSPSIGYRGVLSAAEILDVAAAASTVDGLEYTLHRITNGVAEGALDFPQASSLPLENNLDYMHGVDFRKGCYVGQELTARTHHTGVVRKRIVPLSFYLAGTPPPASIHDVDPAFPHQLPTHLAEIRSKPISTASEAATKPARGKAAGKFTSGVYNVGLACLRLEQVRRWADSSSADPNSKHDALEFSVLSADGETTLLARPWIPSWWPHDQPVPSDQDT</sequence>